<keyword id="KW-0007">Acetylation</keyword>
<keyword id="KW-0013">ADP-ribosylation</keyword>
<keyword id="KW-0158">Chromosome</keyword>
<keyword id="KW-0164">Citrullination</keyword>
<keyword id="KW-0903">Direct protein sequencing</keyword>
<keyword id="KW-0238">DNA-binding</keyword>
<keyword id="KW-0379">Hydroxylation</keyword>
<keyword id="KW-0488">Methylation</keyword>
<keyword id="KW-0539">Nucleus</keyword>
<keyword id="KW-0597">Phosphoprotein</keyword>
<keyword id="KW-1185">Reference proteome</keyword>
<name>H12_BOVIN</name>
<reference key="1">
    <citation type="journal article" date="2009" name="Genome Biol.">
        <title>A whole-genome assembly of the domestic cow, Bos taurus.</title>
        <authorList>
            <person name="Zimin A.V."/>
            <person name="Delcher A.L."/>
            <person name="Florea L."/>
            <person name="Kelley D.R."/>
            <person name="Schatz M.C."/>
            <person name="Puiu D."/>
            <person name="Hanrahan F."/>
            <person name="Pertea G."/>
            <person name="Van Tassell C.P."/>
            <person name="Sonstegard T.S."/>
            <person name="Marcais G."/>
            <person name="Roberts M."/>
            <person name="Subramanian P."/>
            <person name="Yorke J.A."/>
            <person name="Salzberg S.L."/>
        </authorList>
    </citation>
    <scope>NUCLEOTIDE SEQUENCE [LARGE SCALE GENOMIC DNA]</scope>
    <source>
        <strain>Hereford</strain>
    </source>
</reference>
<reference key="2">
    <citation type="submission" date="2007-02" db="EMBL/GenBank/DDBJ databases">
        <authorList>
            <consortium name="NIH - Mammalian Gene Collection (MGC) project"/>
        </authorList>
    </citation>
    <scope>NUCLEOTIDE SEQUENCE [LARGE SCALE MRNA]</scope>
    <source>
        <strain>Hereford</strain>
        <tissue>Fetal cerebellum</tissue>
    </source>
</reference>
<reference key="3">
    <citation type="journal article" date="1981" name="J. Biol. Chem.">
        <title>The amino acid sequence of residues 1-104 of CTL-1, a bovine H1 histone.</title>
        <authorList>
            <person name="Liao L.W."/>
            <person name="Cole R.D."/>
        </authorList>
    </citation>
    <scope>PROTEIN SEQUENCE OF 2-105</scope>
</reference>
<reference key="4">
    <citation type="journal article" date="1971" name="J. Biol. Chem.">
        <title>Amino acid sequence and sequence variability of the amino-terminal regions of lysine-rich histones.</title>
        <authorList>
            <person name="Rall S.C."/>
            <person name="Cole R.D."/>
        </authorList>
    </citation>
    <scope>AMINO-ACID COMPOSITION OF TRYPTIC PEPTIDES</scope>
</reference>
<reference key="5">
    <citation type="journal article" date="1988" name="FEBS Lett.">
        <title>Identification of the phosphoserine residue in histone H1 phosphorylated by protein kinase C.</title>
        <authorList>
            <person name="Jakes S."/>
            <person name="Hastings T.G."/>
            <person name="Reimann E.M."/>
            <person name="Schlender K.K."/>
        </authorList>
    </citation>
    <scope>PHOSPHORYLATION AT SER-104</scope>
</reference>
<reference key="6">
    <citation type="journal article" date="1994" name="Protein Sci.">
        <title>A proposal for a coherent mammalian histone H1 nomenclature correlated with amino acid sequences.</title>
        <authorList>
            <person name="Parseghian M.H."/>
            <person name="Henschen A.H."/>
            <person name="Krieglstein K.G."/>
            <person name="Hamkalo B.A."/>
        </authorList>
    </citation>
    <scope>NOMENCLATURE</scope>
</reference>
<evidence type="ECO:0000250" key="1"/>
<evidence type="ECO:0000250" key="2">
    <source>
        <dbReference type="UniProtKB" id="P15864"/>
    </source>
</evidence>
<evidence type="ECO:0000250" key="3">
    <source>
        <dbReference type="UniProtKB" id="P16403"/>
    </source>
</evidence>
<evidence type="ECO:0000250" key="4">
    <source>
        <dbReference type="UniProtKB" id="P43277"/>
    </source>
</evidence>
<evidence type="ECO:0000255" key="5">
    <source>
        <dbReference type="PROSITE-ProRule" id="PRU00837"/>
    </source>
</evidence>
<evidence type="ECO:0000256" key="6">
    <source>
        <dbReference type="SAM" id="MobiDB-lite"/>
    </source>
</evidence>
<evidence type="ECO:0000269" key="7">
    <source>
    </source>
</evidence>
<evidence type="ECO:0000269" key="8">
    <source>
    </source>
</evidence>
<comment type="function">
    <text evidence="1">Histone H1 protein binds to linker DNA between nucleosomes forming the macromolecular structure known as the chromatin fiber. Histones H1 are necessary for the condensation of nucleosome chains into higher-order structured fibers. Also acts as a regulator of individual gene transcription through chromatin remodeling, nucleosome spacing and DNA methylation (By similarity).</text>
</comment>
<comment type="interaction">
    <interactant intactId="EBI-7580031">
        <id>P02253</id>
    </interactant>
    <interactant intactId="EBI-7579996">
        <id>Q57V41</id>
        <label>SIR2rp1</label>
    </interactant>
    <organismsDiffer>true</organismsDiffer>
    <experiments>7</experiments>
</comment>
<comment type="subcellular location">
    <subcellularLocation>
        <location>Nucleus</location>
    </subcellularLocation>
    <subcellularLocation>
        <location>Chromosome</location>
    </subcellularLocation>
    <text evidence="1">Mainly localizes in euchromatin.</text>
</comment>
<comment type="domain">
    <text evidence="1">The C-terminal domain is required for high-affinity binding to chromatin.</text>
</comment>
<comment type="PTM">
    <text evidence="1">H1 histones are progressively phosphorylated during the cell cycle, becoming maximally phosphorylated during late G2 phase and M phase, and being dephosphorylated sharply thereafter.</text>
</comment>
<comment type="PTM">
    <text evidence="2">Crotonylation (Kcr) is specifically present in male germ cells and marks testis-specific genes in post-meiotic cells, including X-linked genes that escape sex chromosome inactivation in haploid cells. Crotonylation marks active promoters and enhancers and confers resistance to transcriptional repressors. It is also associated with post-meiotically activated genes on autosomes.</text>
</comment>
<comment type="PTM">
    <text evidence="3">ADP-ribosylated on Ser-188 in response to DNA damage.</text>
</comment>
<comment type="PTM">
    <text evidence="2">Citrullination at Arg-54 (H1R54ci) by PADI4 takes place within the DNA-binding site of H1 and results in its displacement from chromatin and global chromatin decondensation, thereby promoting pluripotency and stem cell maintenance.</text>
</comment>
<comment type="similarity">
    <text evidence="5">Belongs to the histone H1/H5 family.</text>
</comment>
<dbReference type="EMBL" id="DAAA02055500">
    <property type="status" value="NOT_ANNOTATED_CDS"/>
    <property type="molecule type" value="Genomic_DNA"/>
</dbReference>
<dbReference type="EMBL" id="BC133454">
    <property type="protein sequence ID" value="AAI33455.1"/>
    <property type="molecule type" value="mRNA"/>
</dbReference>
<dbReference type="PIR" id="A92316">
    <property type="entry name" value="HSBO11"/>
</dbReference>
<dbReference type="RefSeq" id="NP_001076894.1">
    <property type="nucleotide sequence ID" value="NM_001083425.2"/>
</dbReference>
<dbReference type="SMR" id="P02253"/>
<dbReference type="BioGRID" id="170598">
    <property type="interactions" value="4"/>
</dbReference>
<dbReference type="FunCoup" id="P02253">
    <property type="interactions" value="227"/>
</dbReference>
<dbReference type="IntAct" id="P02253">
    <property type="interactions" value="1"/>
</dbReference>
<dbReference type="MINT" id="P02253"/>
<dbReference type="STRING" id="9913.ENSBTAP00000015499"/>
<dbReference type="iPTMnet" id="P02253"/>
<dbReference type="PaxDb" id="9913-ENSBTAP00000015499"/>
<dbReference type="PeptideAtlas" id="P02253"/>
<dbReference type="Ensembl" id="ENSBTAT00000093243.1">
    <property type="protein sequence ID" value="ENSBTAP00000086873.1"/>
    <property type="gene ID" value="ENSBTAG00000011677.7"/>
</dbReference>
<dbReference type="Ensembl" id="ENSBTAT00000111105.1">
    <property type="protein sequence ID" value="ENSBTAP00000089120.1"/>
    <property type="gene ID" value="ENSBTAG00000011677.7"/>
</dbReference>
<dbReference type="GeneID" id="513971"/>
<dbReference type="KEGG" id="bta:513971"/>
<dbReference type="CTD" id="3006"/>
<dbReference type="VGNC" id="VGNC:83558">
    <property type="gene designation" value="H1-2"/>
</dbReference>
<dbReference type="eggNOG" id="KOG4012">
    <property type="taxonomic scope" value="Eukaryota"/>
</dbReference>
<dbReference type="GeneTree" id="ENSGT00940000163082"/>
<dbReference type="HOGENOM" id="CLU_052897_7_0_1"/>
<dbReference type="InParanoid" id="P02253"/>
<dbReference type="OrthoDB" id="9634976at2759"/>
<dbReference type="TreeFam" id="TF313664"/>
<dbReference type="CD-CODE" id="D7FE2080">
    <property type="entry name" value="Nucleolus"/>
</dbReference>
<dbReference type="Proteomes" id="UP000009136">
    <property type="component" value="Chromosome 23"/>
</dbReference>
<dbReference type="GO" id="GO:0000791">
    <property type="term" value="C:euchromatin"/>
    <property type="evidence" value="ECO:0000318"/>
    <property type="project" value="GO_Central"/>
</dbReference>
<dbReference type="GO" id="GO:0000786">
    <property type="term" value="C:nucleosome"/>
    <property type="evidence" value="ECO:0007669"/>
    <property type="project" value="InterPro"/>
</dbReference>
<dbReference type="GO" id="GO:0005634">
    <property type="term" value="C:nucleus"/>
    <property type="evidence" value="ECO:0000318"/>
    <property type="project" value="GO_Central"/>
</dbReference>
<dbReference type="GO" id="GO:0003690">
    <property type="term" value="F:double-stranded DNA binding"/>
    <property type="evidence" value="ECO:0000318"/>
    <property type="project" value="GO_Central"/>
</dbReference>
<dbReference type="GO" id="GO:0031492">
    <property type="term" value="F:nucleosomal DNA binding"/>
    <property type="evidence" value="ECO:0000318"/>
    <property type="project" value="GO_Central"/>
</dbReference>
<dbReference type="GO" id="GO:0030527">
    <property type="term" value="F:structural constituent of chromatin"/>
    <property type="evidence" value="ECO:0007669"/>
    <property type="project" value="Ensembl"/>
</dbReference>
<dbReference type="GO" id="GO:0030261">
    <property type="term" value="P:chromosome condensation"/>
    <property type="evidence" value="ECO:0000318"/>
    <property type="project" value="GO_Central"/>
</dbReference>
<dbReference type="GO" id="GO:0045910">
    <property type="term" value="P:negative regulation of DNA recombination"/>
    <property type="evidence" value="ECO:0000318"/>
    <property type="project" value="GO_Central"/>
</dbReference>
<dbReference type="GO" id="GO:0000122">
    <property type="term" value="P:negative regulation of transcription by RNA polymerase II"/>
    <property type="evidence" value="ECO:0007669"/>
    <property type="project" value="Ensembl"/>
</dbReference>
<dbReference type="GO" id="GO:0006334">
    <property type="term" value="P:nucleosome assembly"/>
    <property type="evidence" value="ECO:0007669"/>
    <property type="project" value="InterPro"/>
</dbReference>
<dbReference type="CDD" id="cd00073">
    <property type="entry name" value="H15"/>
    <property type="match status" value="1"/>
</dbReference>
<dbReference type="FunFam" id="1.10.10.10:FF:000075">
    <property type="entry name" value="Histone H1 like"/>
    <property type="match status" value="1"/>
</dbReference>
<dbReference type="Gene3D" id="1.10.10.10">
    <property type="entry name" value="Winged helix-like DNA-binding domain superfamily/Winged helix DNA-binding domain"/>
    <property type="match status" value="1"/>
</dbReference>
<dbReference type="InterPro" id="IPR005819">
    <property type="entry name" value="H1/H5"/>
</dbReference>
<dbReference type="InterPro" id="IPR005818">
    <property type="entry name" value="Histone_H1/H5_H15"/>
</dbReference>
<dbReference type="InterPro" id="IPR036388">
    <property type="entry name" value="WH-like_DNA-bd_sf"/>
</dbReference>
<dbReference type="InterPro" id="IPR036390">
    <property type="entry name" value="WH_DNA-bd_sf"/>
</dbReference>
<dbReference type="Pfam" id="PF00538">
    <property type="entry name" value="Linker_histone"/>
    <property type="match status" value="1"/>
</dbReference>
<dbReference type="PRINTS" id="PR00624">
    <property type="entry name" value="HISTONEH5"/>
</dbReference>
<dbReference type="SMART" id="SM00526">
    <property type="entry name" value="H15"/>
    <property type="match status" value="1"/>
</dbReference>
<dbReference type="SUPFAM" id="SSF46785">
    <property type="entry name" value="Winged helix' DNA-binding domain"/>
    <property type="match status" value="1"/>
</dbReference>
<dbReference type="PROSITE" id="PS51504">
    <property type="entry name" value="H15"/>
    <property type="match status" value="1"/>
</dbReference>
<gene>
    <name evidence="3" type="primary">H1-2</name>
</gene>
<accession>P02253</accession>
<accession>A3KN02</accession>
<sequence>MSETAPAAPAAAPPAEKTPVKKKAAKKPAGARRKASGPPVSELITKAVAASKERSGVSLAALKKALAAAGYDVEKNNSRIKLGLKSLVSKGTLVQTKGTGASGSFKLNKKAATGEAKPKAKKAGAAKPKKAAGAAKKTKKATGAATPKKTAKKTPKKAKKPAAAAVTKKVAKSPKKAKAAKPKKAAKSAAKAVKPKAAKPKVAKPKKAAPKKK</sequence>
<proteinExistence type="evidence at protein level"/>
<protein>
    <recommendedName>
        <fullName>Histone H1.2</fullName>
    </recommendedName>
    <alternativeName>
        <fullName>CTL-1</fullName>
    </alternativeName>
</protein>
<organism>
    <name type="scientific">Bos taurus</name>
    <name type="common">Bovine</name>
    <dbReference type="NCBI Taxonomy" id="9913"/>
    <lineage>
        <taxon>Eukaryota</taxon>
        <taxon>Metazoa</taxon>
        <taxon>Chordata</taxon>
        <taxon>Craniata</taxon>
        <taxon>Vertebrata</taxon>
        <taxon>Euteleostomi</taxon>
        <taxon>Mammalia</taxon>
        <taxon>Eutheria</taxon>
        <taxon>Laurasiatheria</taxon>
        <taxon>Artiodactyla</taxon>
        <taxon>Ruminantia</taxon>
        <taxon>Pecora</taxon>
        <taxon>Bovidae</taxon>
        <taxon>Bovinae</taxon>
        <taxon>Bos</taxon>
    </lineage>
</organism>
<feature type="initiator methionine" description="Removed" evidence="8">
    <location>
        <position position="1"/>
    </location>
</feature>
<feature type="chain" id="PRO_0000195903" description="Histone H1.2">
    <location>
        <begin position="2"/>
        <end position="213"/>
    </location>
</feature>
<feature type="domain" description="H15" evidence="5">
    <location>
        <begin position="36"/>
        <end position="109"/>
    </location>
</feature>
<feature type="region of interest" description="Disordered" evidence="6">
    <location>
        <begin position="1"/>
        <end position="41"/>
    </location>
</feature>
<feature type="region of interest" description="Disordered" evidence="6">
    <location>
        <begin position="95"/>
        <end position="213"/>
    </location>
</feature>
<feature type="compositionally biased region" description="Low complexity" evidence="6">
    <location>
        <begin position="1"/>
        <end position="17"/>
    </location>
</feature>
<feature type="compositionally biased region" description="Basic residues" evidence="6">
    <location>
        <begin position="20"/>
        <end position="35"/>
    </location>
</feature>
<feature type="compositionally biased region" description="Basic residues" evidence="6">
    <location>
        <begin position="119"/>
        <end position="140"/>
    </location>
</feature>
<feature type="compositionally biased region" description="Basic residues" evidence="6">
    <location>
        <begin position="149"/>
        <end position="160"/>
    </location>
</feature>
<feature type="compositionally biased region" description="Basic residues" evidence="6">
    <location>
        <begin position="169"/>
        <end position="186"/>
    </location>
</feature>
<feature type="compositionally biased region" description="Basic residues" evidence="6">
    <location>
        <begin position="193"/>
        <end position="213"/>
    </location>
</feature>
<feature type="modified residue" description="N-acetylserine; partial" evidence="3">
    <location>
        <position position="2"/>
    </location>
</feature>
<feature type="modified residue" description="Phosphoserine" evidence="3">
    <location>
        <position position="2"/>
    </location>
</feature>
<feature type="modified residue" description="N6-acetyllysine" evidence="2">
    <location>
        <position position="17"/>
    </location>
</feature>
<feature type="modified residue" description="N6-(2-hydroxyisobutyryl)lysine" evidence="2">
    <location>
        <position position="23"/>
    </location>
</feature>
<feature type="modified residue" description="N6-(2-hydroxyisobutyryl)lysine" evidence="2">
    <location>
        <position position="26"/>
    </location>
</feature>
<feature type="modified residue" description="N6-(2-hydroxyisobutyryl)lysine" evidence="2">
    <location>
        <position position="27"/>
    </location>
</feature>
<feature type="modified residue" description="N6-(beta-hydroxybutyryl)lysine; alternate" evidence="4">
    <location>
        <position position="34"/>
    </location>
</feature>
<feature type="modified residue" description="N6-crotonyllysine; alternate" evidence="3">
    <location>
        <position position="34"/>
    </location>
</feature>
<feature type="modified residue" description="N6-methyllysine; alternate" evidence="3">
    <location>
        <position position="34"/>
    </location>
</feature>
<feature type="modified residue" description="N6-(2-hydroxyisobutyryl)lysine" evidence="2">
    <location>
        <position position="46"/>
    </location>
</feature>
<feature type="modified residue" description="N6-(2-hydroxyisobutyryl)lysine; alternate" evidence="2">
    <location>
        <position position="52"/>
    </location>
</feature>
<feature type="modified residue" description="N6-(beta-hydroxybutyryl)lysine; alternate" evidence="4">
    <location>
        <position position="52"/>
    </location>
</feature>
<feature type="modified residue" description="Citrulline" evidence="2">
    <location>
        <position position="54"/>
    </location>
</feature>
<feature type="modified residue" description="N6-(2-hydroxyisobutyryl)lysine" evidence="2">
    <location>
        <position position="63"/>
    </location>
</feature>
<feature type="modified residue" description="N6-(2-hydroxyisobutyryl)lysine; alternate" evidence="2">
    <location>
        <position position="64"/>
    </location>
</feature>
<feature type="modified residue" description="N6-(beta-hydroxybutyryl)lysine; alternate" evidence="4">
    <location>
        <position position="64"/>
    </location>
</feature>
<feature type="modified residue" description="N6-crotonyllysine; alternate" evidence="3">
    <location>
        <position position="64"/>
    </location>
</feature>
<feature type="modified residue" description="N6-(2-hydroxyisobutyryl)lysine" evidence="2">
    <location>
        <position position="75"/>
    </location>
</feature>
<feature type="modified residue" description="N6-(2-hydroxyisobutyryl)lysine" evidence="2">
    <location>
        <position position="81"/>
    </location>
</feature>
<feature type="modified residue" description="N6-(2-hydroxyisobutyryl)lysine; alternate" evidence="2">
    <location>
        <position position="85"/>
    </location>
</feature>
<feature type="modified residue" description="N6-(beta-hydroxybutyryl)lysine; alternate" evidence="4">
    <location>
        <position position="85"/>
    </location>
</feature>
<feature type="modified residue" description="N6-crotonyllysine; alternate" evidence="3">
    <location>
        <position position="85"/>
    </location>
</feature>
<feature type="modified residue" description="N6-(2-hydroxyisobutyryl)lysine; alternate" evidence="2">
    <location>
        <position position="90"/>
    </location>
</feature>
<feature type="modified residue" description="N6-(beta-hydroxybutyryl)lysine; alternate" evidence="4">
    <location>
        <position position="90"/>
    </location>
</feature>
<feature type="modified residue" description="N6-crotonyllysine; alternate" evidence="3">
    <location>
        <position position="90"/>
    </location>
</feature>
<feature type="modified residue" description="N6-(2-hydroxyisobutyryl)lysine; alternate" evidence="2">
    <location>
        <position position="97"/>
    </location>
</feature>
<feature type="modified residue" description="N6-crotonyllysine; alternate" evidence="3">
    <location>
        <position position="97"/>
    </location>
</feature>
<feature type="modified residue" description="N6-succinyllysine; alternate" evidence="2">
    <location>
        <position position="97"/>
    </location>
</feature>
<feature type="modified residue" description="Phosphoserine; by PKC" evidence="7">
    <location>
        <position position="104"/>
    </location>
</feature>
<feature type="modified residue" description="N6-(beta-hydroxybutyryl)lysine" evidence="4">
    <location>
        <position position="106"/>
    </location>
</feature>
<feature type="modified residue" description="N6-(2-hydroxyisobutyryl)lysine" evidence="2">
    <location>
        <position position="110"/>
    </location>
</feature>
<feature type="modified residue" description="N6-(2-hydroxyisobutyryl)lysine" evidence="2">
    <location>
        <position position="117"/>
    </location>
</feature>
<feature type="modified residue" description="N6-(2-hydroxyisobutyryl)lysine" evidence="2">
    <location>
        <position position="121"/>
    </location>
</feature>
<feature type="modified residue" description="N6-(2-hydroxyisobutyryl)lysine" evidence="2">
    <location>
        <position position="129"/>
    </location>
</feature>
<feature type="modified residue" description="N6-(2-hydroxyisobutyryl)lysine" evidence="2">
    <location>
        <position position="136"/>
    </location>
</feature>
<feature type="modified residue" description="Phosphothreonine" evidence="3">
    <location>
        <position position="146"/>
    </location>
</feature>
<feature type="modified residue" description="N6-(2-hydroxyisobutyryl)lysine" evidence="2">
    <location>
        <position position="148"/>
    </location>
</feature>
<feature type="modified residue" description="N6-(2-hydroxyisobutyryl)lysine; alternate" evidence="2">
    <location>
        <position position="159"/>
    </location>
</feature>
<feature type="modified residue" description="N6-crotonyllysine; alternate" evidence="3">
    <location>
        <position position="159"/>
    </location>
</feature>
<feature type="modified residue" description="N6-(2-hydroxyisobutyryl)lysine; alternate" evidence="2">
    <location>
        <position position="168"/>
    </location>
</feature>
<feature type="modified residue" description="N6-crotonyllysine; alternate" evidence="3">
    <location>
        <position position="168"/>
    </location>
</feature>
<feature type="modified residue" description="N6-methyllysine; by EHMT1 and EHMT2" evidence="3">
    <location>
        <position position="187"/>
    </location>
</feature>
<feature type="modified residue" description="ADP-ribosylserine" evidence="3">
    <location>
        <position position="188"/>
    </location>
</feature>